<proteinExistence type="inferred from homology"/>
<feature type="chain" id="PRO_0000119567" description="Glutamate--tRNA ligase">
    <location>
        <begin position="1"/>
        <end position="466"/>
    </location>
</feature>
<feature type="short sequence motif" description="'HIGH' region" evidence="1">
    <location>
        <begin position="10"/>
        <end position="20"/>
    </location>
</feature>
<feature type="short sequence motif" description="'KMSKS' region" evidence="1">
    <location>
        <begin position="237"/>
        <end position="241"/>
    </location>
</feature>
<feature type="binding site" evidence="1">
    <location>
        <position position="99"/>
    </location>
    <ligand>
        <name>Zn(2+)</name>
        <dbReference type="ChEBI" id="CHEBI:29105"/>
    </ligand>
</feature>
<feature type="binding site" evidence="1">
    <location>
        <position position="101"/>
    </location>
    <ligand>
        <name>Zn(2+)</name>
        <dbReference type="ChEBI" id="CHEBI:29105"/>
    </ligand>
</feature>
<feature type="binding site" evidence="1">
    <location>
        <position position="126"/>
    </location>
    <ligand>
        <name>Zn(2+)</name>
        <dbReference type="ChEBI" id="CHEBI:29105"/>
    </ligand>
</feature>
<feature type="binding site" evidence="1">
    <location>
        <position position="128"/>
    </location>
    <ligand>
        <name>Zn(2+)</name>
        <dbReference type="ChEBI" id="CHEBI:29105"/>
    </ligand>
</feature>
<feature type="binding site" evidence="1">
    <location>
        <position position="240"/>
    </location>
    <ligand>
        <name>ATP</name>
        <dbReference type="ChEBI" id="CHEBI:30616"/>
    </ligand>
</feature>
<name>SYE_GEOSL</name>
<evidence type="ECO:0000255" key="1">
    <source>
        <dbReference type="HAMAP-Rule" id="MF_00022"/>
    </source>
</evidence>
<accession>Q74DU6</accession>
<protein>
    <recommendedName>
        <fullName evidence="1">Glutamate--tRNA ligase</fullName>
        <ecNumber evidence="1">6.1.1.17</ecNumber>
    </recommendedName>
    <alternativeName>
        <fullName evidence="1">Glutamyl-tRNA synthetase</fullName>
        <shortName evidence="1">GluRS</shortName>
    </alternativeName>
</protein>
<dbReference type="EC" id="6.1.1.17" evidence="1"/>
<dbReference type="EMBL" id="AE017180">
    <property type="protein sequence ID" value="AAR34595.1"/>
    <property type="molecule type" value="Genomic_DNA"/>
</dbReference>
<dbReference type="RefSeq" id="NP_952272.1">
    <property type="nucleotide sequence ID" value="NC_002939.5"/>
</dbReference>
<dbReference type="RefSeq" id="WP_010941876.1">
    <property type="nucleotide sequence ID" value="NC_002939.5"/>
</dbReference>
<dbReference type="SMR" id="Q74DU6"/>
<dbReference type="FunCoup" id="Q74DU6">
    <property type="interactions" value="594"/>
</dbReference>
<dbReference type="STRING" id="243231.GSU1219"/>
<dbReference type="EnsemblBacteria" id="AAR34595">
    <property type="protein sequence ID" value="AAR34595"/>
    <property type="gene ID" value="GSU1219"/>
</dbReference>
<dbReference type="KEGG" id="gsu:GSU1219"/>
<dbReference type="PATRIC" id="fig|243231.5.peg.1214"/>
<dbReference type="eggNOG" id="COG0008">
    <property type="taxonomic scope" value="Bacteria"/>
</dbReference>
<dbReference type="HOGENOM" id="CLU_015768_6_0_7"/>
<dbReference type="InParanoid" id="Q74DU6"/>
<dbReference type="OrthoDB" id="9807503at2"/>
<dbReference type="Proteomes" id="UP000000577">
    <property type="component" value="Chromosome"/>
</dbReference>
<dbReference type="GO" id="GO:0005829">
    <property type="term" value="C:cytosol"/>
    <property type="evidence" value="ECO:0000318"/>
    <property type="project" value="GO_Central"/>
</dbReference>
<dbReference type="GO" id="GO:0005524">
    <property type="term" value="F:ATP binding"/>
    <property type="evidence" value="ECO:0007669"/>
    <property type="project" value="UniProtKB-UniRule"/>
</dbReference>
<dbReference type="GO" id="GO:0004818">
    <property type="term" value="F:glutamate-tRNA ligase activity"/>
    <property type="evidence" value="ECO:0000318"/>
    <property type="project" value="GO_Central"/>
</dbReference>
<dbReference type="GO" id="GO:0000049">
    <property type="term" value="F:tRNA binding"/>
    <property type="evidence" value="ECO:0007669"/>
    <property type="project" value="InterPro"/>
</dbReference>
<dbReference type="GO" id="GO:0008270">
    <property type="term" value="F:zinc ion binding"/>
    <property type="evidence" value="ECO:0007669"/>
    <property type="project" value="UniProtKB-UniRule"/>
</dbReference>
<dbReference type="GO" id="GO:0006424">
    <property type="term" value="P:glutamyl-tRNA aminoacylation"/>
    <property type="evidence" value="ECO:0000318"/>
    <property type="project" value="GO_Central"/>
</dbReference>
<dbReference type="CDD" id="cd00808">
    <property type="entry name" value="GluRS_core"/>
    <property type="match status" value="1"/>
</dbReference>
<dbReference type="FunFam" id="3.40.50.620:FF:000007">
    <property type="entry name" value="Glutamate--tRNA ligase"/>
    <property type="match status" value="1"/>
</dbReference>
<dbReference type="Gene3D" id="1.10.10.350">
    <property type="match status" value="1"/>
</dbReference>
<dbReference type="Gene3D" id="1.10.8.70">
    <property type="entry name" value="Glutamate-tRNA synthetase, class I, anticodon-binding domain 1"/>
    <property type="match status" value="1"/>
</dbReference>
<dbReference type="Gene3D" id="3.40.50.620">
    <property type="entry name" value="HUPs"/>
    <property type="match status" value="1"/>
</dbReference>
<dbReference type="HAMAP" id="MF_00022">
    <property type="entry name" value="Glu_tRNA_synth_type1"/>
    <property type="match status" value="1"/>
</dbReference>
<dbReference type="InterPro" id="IPR045462">
    <property type="entry name" value="aa-tRNA-synth_I_cd-bd"/>
</dbReference>
<dbReference type="InterPro" id="IPR020751">
    <property type="entry name" value="aa-tRNA-synth_I_codon-bd_sub2"/>
</dbReference>
<dbReference type="InterPro" id="IPR001412">
    <property type="entry name" value="aa-tRNA-synth_I_CS"/>
</dbReference>
<dbReference type="InterPro" id="IPR008925">
    <property type="entry name" value="aa_tRNA-synth_I_cd-bd_sf"/>
</dbReference>
<dbReference type="InterPro" id="IPR004527">
    <property type="entry name" value="Glu-tRNA-ligase_bac/mito"/>
</dbReference>
<dbReference type="InterPro" id="IPR020752">
    <property type="entry name" value="Glu-tRNA-synth_I_codon-bd_sub1"/>
</dbReference>
<dbReference type="InterPro" id="IPR000924">
    <property type="entry name" value="Glu/Gln-tRNA-synth"/>
</dbReference>
<dbReference type="InterPro" id="IPR020058">
    <property type="entry name" value="Glu/Gln-tRNA-synth_Ib_cat-dom"/>
</dbReference>
<dbReference type="InterPro" id="IPR049940">
    <property type="entry name" value="GluQ/Sye"/>
</dbReference>
<dbReference type="InterPro" id="IPR033910">
    <property type="entry name" value="GluRS_core"/>
</dbReference>
<dbReference type="InterPro" id="IPR014729">
    <property type="entry name" value="Rossmann-like_a/b/a_fold"/>
</dbReference>
<dbReference type="NCBIfam" id="TIGR00464">
    <property type="entry name" value="gltX_bact"/>
    <property type="match status" value="1"/>
</dbReference>
<dbReference type="NCBIfam" id="NF004315">
    <property type="entry name" value="PRK05710.1-4"/>
    <property type="match status" value="1"/>
</dbReference>
<dbReference type="PANTHER" id="PTHR43311">
    <property type="entry name" value="GLUTAMATE--TRNA LIGASE"/>
    <property type="match status" value="1"/>
</dbReference>
<dbReference type="PANTHER" id="PTHR43311:SF2">
    <property type="entry name" value="GLUTAMATE--TRNA LIGASE, MITOCHONDRIAL-RELATED"/>
    <property type="match status" value="1"/>
</dbReference>
<dbReference type="Pfam" id="PF19269">
    <property type="entry name" value="Anticodon_2"/>
    <property type="match status" value="1"/>
</dbReference>
<dbReference type="Pfam" id="PF00749">
    <property type="entry name" value="tRNA-synt_1c"/>
    <property type="match status" value="1"/>
</dbReference>
<dbReference type="PRINTS" id="PR00987">
    <property type="entry name" value="TRNASYNTHGLU"/>
</dbReference>
<dbReference type="SUPFAM" id="SSF48163">
    <property type="entry name" value="An anticodon-binding domain of class I aminoacyl-tRNA synthetases"/>
    <property type="match status" value="1"/>
</dbReference>
<dbReference type="SUPFAM" id="SSF52374">
    <property type="entry name" value="Nucleotidylyl transferase"/>
    <property type="match status" value="1"/>
</dbReference>
<dbReference type="PROSITE" id="PS00178">
    <property type="entry name" value="AA_TRNA_LIGASE_I"/>
    <property type="match status" value="1"/>
</dbReference>
<sequence>MSDVRLRFAPSPTGYLHVGGARTALFNWLLARKQGGTFILRIEDTDVARSTQESVDAILQGMEWLGLDWDEGPFYQSERFPVYREFVERLLAEGKAYRCYCTPEELEARREQAMKEGRKPKYDGTCRDLVTQDADRPFVVRFRAPHEGVTAFDDLIKGRIAFNNEELDDLIIQRTDGTPTYNFVVVIDDATMGITTVIRGDDHINNTPRQILLYEALGYPVPRFAHVPMILGADKTRLSKRHGATSVMAYRDMGFLPEAMVNYLVRLGWSHGDEEIFSRQDLVEKFTIEAVGKSAGVFNPDKLLWLNHHYIKESSPERLAELLVPFLRERGVDPSTGPSLPQVVKTLQERSRTLVEMADGALFYYRSEISYDEEAAAKHLVPGTLPLLASLAEKLDACADFSHSGLEAAFKEFIAEKGIKFGQLGPAVRVSLCGGTASPGIYEVVEALGKDETLRRLRRAVAYLEQ</sequence>
<comment type="function">
    <text evidence="1">Catalyzes the attachment of glutamate to tRNA(Glu) in a two-step reaction: glutamate is first activated by ATP to form Glu-AMP and then transferred to the acceptor end of tRNA(Glu).</text>
</comment>
<comment type="catalytic activity">
    <reaction evidence="1">
        <text>tRNA(Glu) + L-glutamate + ATP = L-glutamyl-tRNA(Glu) + AMP + diphosphate</text>
        <dbReference type="Rhea" id="RHEA:23540"/>
        <dbReference type="Rhea" id="RHEA-COMP:9663"/>
        <dbReference type="Rhea" id="RHEA-COMP:9680"/>
        <dbReference type="ChEBI" id="CHEBI:29985"/>
        <dbReference type="ChEBI" id="CHEBI:30616"/>
        <dbReference type="ChEBI" id="CHEBI:33019"/>
        <dbReference type="ChEBI" id="CHEBI:78442"/>
        <dbReference type="ChEBI" id="CHEBI:78520"/>
        <dbReference type="ChEBI" id="CHEBI:456215"/>
        <dbReference type="EC" id="6.1.1.17"/>
    </reaction>
</comment>
<comment type="cofactor">
    <cofactor evidence="1">
        <name>Zn(2+)</name>
        <dbReference type="ChEBI" id="CHEBI:29105"/>
    </cofactor>
    <text evidence="1">Binds 1 zinc ion per subunit.</text>
</comment>
<comment type="subunit">
    <text evidence="1">Monomer.</text>
</comment>
<comment type="subcellular location">
    <subcellularLocation>
        <location evidence="1">Cytoplasm</location>
    </subcellularLocation>
</comment>
<comment type="similarity">
    <text evidence="1">Belongs to the class-I aminoacyl-tRNA synthetase family. Glutamate--tRNA ligase type 1 subfamily.</text>
</comment>
<reference key="1">
    <citation type="journal article" date="2003" name="Science">
        <title>Genome of Geobacter sulfurreducens: metal reduction in subsurface environments.</title>
        <authorList>
            <person name="Methe B.A."/>
            <person name="Nelson K.E."/>
            <person name="Eisen J.A."/>
            <person name="Paulsen I.T."/>
            <person name="Nelson W.C."/>
            <person name="Heidelberg J.F."/>
            <person name="Wu D."/>
            <person name="Wu M."/>
            <person name="Ward N.L."/>
            <person name="Beanan M.J."/>
            <person name="Dodson R.J."/>
            <person name="Madupu R."/>
            <person name="Brinkac L.M."/>
            <person name="Daugherty S.C."/>
            <person name="DeBoy R.T."/>
            <person name="Durkin A.S."/>
            <person name="Gwinn M.L."/>
            <person name="Kolonay J.F."/>
            <person name="Sullivan S.A."/>
            <person name="Haft D.H."/>
            <person name="Selengut J."/>
            <person name="Davidsen T.M."/>
            <person name="Zafar N."/>
            <person name="White O."/>
            <person name="Tran B."/>
            <person name="Romero C."/>
            <person name="Forberger H.A."/>
            <person name="Weidman J.F."/>
            <person name="Khouri H.M."/>
            <person name="Feldblyum T.V."/>
            <person name="Utterback T.R."/>
            <person name="Van Aken S.E."/>
            <person name="Lovley D.R."/>
            <person name="Fraser C.M."/>
        </authorList>
    </citation>
    <scope>NUCLEOTIDE SEQUENCE [LARGE SCALE GENOMIC DNA]</scope>
    <source>
        <strain>ATCC 51573 / DSM 12127 / PCA</strain>
    </source>
</reference>
<keyword id="KW-0030">Aminoacyl-tRNA synthetase</keyword>
<keyword id="KW-0067">ATP-binding</keyword>
<keyword id="KW-0963">Cytoplasm</keyword>
<keyword id="KW-0436">Ligase</keyword>
<keyword id="KW-0479">Metal-binding</keyword>
<keyword id="KW-0547">Nucleotide-binding</keyword>
<keyword id="KW-0648">Protein biosynthesis</keyword>
<keyword id="KW-1185">Reference proteome</keyword>
<keyword id="KW-0862">Zinc</keyword>
<organism>
    <name type="scientific">Geobacter sulfurreducens (strain ATCC 51573 / DSM 12127 / PCA)</name>
    <dbReference type="NCBI Taxonomy" id="243231"/>
    <lineage>
        <taxon>Bacteria</taxon>
        <taxon>Pseudomonadati</taxon>
        <taxon>Thermodesulfobacteriota</taxon>
        <taxon>Desulfuromonadia</taxon>
        <taxon>Geobacterales</taxon>
        <taxon>Geobacteraceae</taxon>
        <taxon>Geobacter</taxon>
    </lineage>
</organism>
<gene>
    <name evidence="1" type="primary">gltX</name>
    <name type="ordered locus">GSU1219</name>
</gene>